<sequence length="274" mass="29668">MKLDTSGFETSMPMIGFGSSSDMLDELSSVPSFDLPRTKEFDGFQKKAKDMLKHAKGTTTLAFIFKGGVMVAADSRASMGGYISSQSVKKIIEINPYMLGTMAGGAADCQFWHRNLGIKCRLHELANKRRISVSGASKLLANMLYSYRGMGLSVGTMIAGWDETGPGLYYVDNEGGRLKGDRFSVGSGSPYAYGVLDSGYKYDMSVEEASELARRSIYHATFRDGASGGVASVYHVGPEGWTKLSGDDVGELHYHYYPVAPATAEQVMEEATAE</sequence>
<reference key="1">
    <citation type="journal article" date="1997" name="FEBS Lett.">
        <title>The 20S proteasome gene family in Arabidopsis thaliana.</title>
        <authorList>
            <person name="Parmentier Y."/>
            <person name="Bouchez D."/>
            <person name="Fleck J."/>
            <person name="Genschik P."/>
        </authorList>
    </citation>
    <scope>NUCLEOTIDE SEQUENCE [MRNA]</scope>
    <source>
        <strain>cv. Columbia</strain>
    </source>
</reference>
<reference key="2">
    <citation type="journal article" date="1998" name="Genetics">
        <title>Molecular organization of the 20S proteasome gene family from Arabidopsis thaliana.</title>
        <authorList>
            <person name="Fu H."/>
            <person name="Doelling J.H."/>
            <person name="Arendt C.S."/>
            <person name="Hochstrasser M."/>
            <person name="Vierstra R.D."/>
        </authorList>
    </citation>
    <scope>NUCLEOTIDE SEQUENCE [MRNA]</scope>
    <scope>TISSUE SPECIFICITY</scope>
    <scope>GENE FAMILY</scope>
    <scope>NOMENCLATURE</scope>
    <source>
        <strain>cv. Columbia</strain>
    </source>
</reference>
<reference key="3">
    <citation type="journal article" date="2000" name="Nature">
        <title>Sequence and analysis of chromosome 1 of the plant Arabidopsis thaliana.</title>
        <authorList>
            <person name="Theologis A."/>
            <person name="Ecker J.R."/>
            <person name="Palm C.J."/>
            <person name="Federspiel N.A."/>
            <person name="Kaul S."/>
            <person name="White O."/>
            <person name="Alonso J."/>
            <person name="Altafi H."/>
            <person name="Araujo R."/>
            <person name="Bowman C.L."/>
            <person name="Brooks S.Y."/>
            <person name="Buehler E."/>
            <person name="Chan A."/>
            <person name="Chao Q."/>
            <person name="Chen H."/>
            <person name="Cheuk R.F."/>
            <person name="Chin C.W."/>
            <person name="Chung M.K."/>
            <person name="Conn L."/>
            <person name="Conway A.B."/>
            <person name="Conway A.R."/>
            <person name="Creasy T.H."/>
            <person name="Dewar K."/>
            <person name="Dunn P."/>
            <person name="Etgu P."/>
            <person name="Feldblyum T.V."/>
            <person name="Feng J.-D."/>
            <person name="Fong B."/>
            <person name="Fujii C.Y."/>
            <person name="Gill J.E."/>
            <person name="Goldsmith A.D."/>
            <person name="Haas B."/>
            <person name="Hansen N.F."/>
            <person name="Hughes B."/>
            <person name="Huizar L."/>
            <person name="Hunter J.L."/>
            <person name="Jenkins J."/>
            <person name="Johnson-Hopson C."/>
            <person name="Khan S."/>
            <person name="Khaykin E."/>
            <person name="Kim C.J."/>
            <person name="Koo H.L."/>
            <person name="Kremenetskaia I."/>
            <person name="Kurtz D.B."/>
            <person name="Kwan A."/>
            <person name="Lam B."/>
            <person name="Langin-Hooper S."/>
            <person name="Lee A."/>
            <person name="Lee J.M."/>
            <person name="Lenz C.A."/>
            <person name="Li J.H."/>
            <person name="Li Y.-P."/>
            <person name="Lin X."/>
            <person name="Liu S.X."/>
            <person name="Liu Z.A."/>
            <person name="Luros J.S."/>
            <person name="Maiti R."/>
            <person name="Marziali A."/>
            <person name="Militscher J."/>
            <person name="Miranda M."/>
            <person name="Nguyen M."/>
            <person name="Nierman W.C."/>
            <person name="Osborne B.I."/>
            <person name="Pai G."/>
            <person name="Peterson J."/>
            <person name="Pham P.K."/>
            <person name="Rizzo M."/>
            <person name="Rooney T."/>
            <person name="Rowley D."/>
            <person name="Sakano H."/>
            <person name="Salzberg S.L."/>
            <person name="Schwartz J.R."/>
            <person name="Shinn P."/>
            <person name="Southwick A.M."/>
            <person name="Sun H."/>
            <person name="Tallon L.J."/>
            <person name="Tambunga G."/>
            <person name="Toriumi M.J."/>
            <person name="Town C.D."/>
            <person name="Utterback T."/>
            <person name="Van Aken S."/>
            <person name="Vaysberg M."/>
            <person name="Vysotskaia V.S."/>
            <person name="Walker M."/>
            <person name="Wu D."/>
            <person name="Yu G."/>
            <person name="Fraser C.M."/>
            <person name="Venter J.C."/>
            <person name="Davis R.W."/>
        </authorList>
    </citation>
    <scope>NUCLEOTIDE SEQUENCE [LARGE SCALE GENOMIC DNA]</scope>
    <source>
        <strain>cv. Columbia</strain>
    </source>
</reference>
<reference key="4">
    <citation type="journal article" date="2017" name="Plant J.">
        <title>Araport11: a complete reannotation of the Arabidopsis thaliana reference genome.</title>
        <authorList>
            <person name="Cheng C.Y."/>
            <person name="Krishnakumar V."/>
            <person name="Chan A.P."/>
            <person name="Thibaud-Nissen F."/>
            <person name="Schobel S."/>
            <person name="Town C.D."/>
        </authorList>
    </citation>
    <scope>GENOME REANNOTATION</scope>
    <source>
        <strain>cv. Columbia</strain>
    </source>
</reference>
<reference key="5">
    <citation type="journal article" date="2003" name="Science">
        <title>Empirical analysis of transcriptional activity in the Arabidopsis genome.</title>
        <authorList>
            <person name="Yamada K."/>
            <person name="Lim J."/>
            <person name="Dale J.M."/>
            <person name="Chen H."/>
            <person name="Shinn P."/>
            <person name="Palm C.J."/>
            <person name="Southwick A.M."/>
            <person name="Wu H.C."/>
            <person name="Kim C.J."/>
            <person name="Nguyen M."/>
            <person name="Pham P.K."/>
            <person name="Cheuk R.F."/>
            <person name="Karlin-Newmann G."/>
            <person name="Liu S.X."/>
            <person name="Lam B."/>
            <person name="Sakano H."/>
            <person name="Wu T."/>
            <person name="Yu G."/>
            <person name="Miranda M."/>
            <person name="Quach H.L."/>
            <person name="Tripp M."/>
            <person name="Chang C.H."/>
            <person name="Lee J.M."/>
            <person name="Toriumi M.J."/>
            <person name="Chan M.M."/>
            <person name="Tang C.C."/>
            <person name="Onodera C.S."/>
            <person name="Deng J.M."/>
            <person name="Akiyama K."/>
            <person name="Ansari Y."/>
            <person name="Arakawa T."/>
            <person name="Banh J."/>
            <person name="Banno F."/>
            <person name="Bowser L."/>
            <person name="Brooks S.Y."/>
            <person name="Carninci P."/>
            <person name="Chao Q."/>
            <person name="Choy N."/>
            <person name="Enju A."/>
            <person name="Goldsmith A.D."/>
            <person name="Gurjal M."/>
            <person name="Hansen N.F."/>
            <person name="Hayashizaki Y."/>
            <person name="Johnson-Hopson C."/>
            <person name="Hsuan V.W."/>
            <person name="Iida K."/>
            <person name="Karnes M."/>
            <person name="Khan S."/>
            <person name="Koesema E."/>
            <person name="Ishida J."/>
            <person name="Jiang P.X."/>
            <person name="Jones T."/>
            <person name="Kawai J."/>
            <person name="Kamiya A."/>
            <person name="Meyers C."/>
            <person name="Nakajima M."/>
            <person name="Narusaka M."/>
            <person name="Seki M."/>
            <person name="Sakurai T."/>
            <person name="Satou M."/>
            <person name="Tamse R."/>
            <person name="Vaysberg M."/>
            <person name="Wallender E.K."/>
            <person name="Wong C."/>
            <person name="Yamamura Y."/>
            <person name="Yuan S."/>
            <person name="Shinozaki K."/>
            <person name="Davis R.W."/>
            <person name="Theologis A."/>
            <person name="Ecker J.R."/>
        </authorList>
    </citation>
    <scope>NUCLEOTIDE SEQUENCE [LARGE SCALE MRNA]</scope>
    <source>
        <strain>cv. Columbia</strain>
    </source>
</reference>
<reference key="6">
    <citation type="journal article" date="1999" name="Mol. Biol. Rep.">
        <title>Structure and functional analyses of the 26S proteasome subunits from plants.</title>
        <authorList>
            <person name="Fu H."/>
            <person name="Girod P.-A."/>
            <person name="Doelling J.H."/>
            <person name="van Nocker S."/>
            <person name="Hochstrasser M."/>
            <person name="Finley D."/>
            <person name="Vierstra R.D."/>
        </authorList>
    </citation>
    <scope>SUBUNIT</scope>
</reference>
<reference key="7">
    <citation type="journal article" date="2004" name="J. Biol. Chem.">
        <title>Purification of the Arabidopsis 26 S proteasome: biochemical and molecular analyses revealed the presence of multiple isoforms.</title>
        <authorList>
            <person name="Yang P."/>
            <person name="Fu H."/>
            <person name="Walker J."/>
            <person name="Papa C.M."/>
            <person name="Smalle J."/>
            <person name="Ju Y.-M."/>
            <person name="Vierstra R.D."/>
        </authorList>
    </citation>
    <scope>SUBUNIT</scope>
    <scope>IDENTIFICATION BY MASS SPECTROMETRY</scope>
</reference>
<reference key="8">
    <citation type="journal article" date="2010" name="J. Biol. Chem.">
        <title>Affinity purification of the Arabidopsis 26 S proteasome reveals a diverse array of plant proteolytic complexes.</title>
        <authorList>
            <person name="Book A.J."/>
            <person name="Gladman N.P."/>
            <person name="Lee S.S."/>
            <person name="Scalf M."/>
            <person name="Smith L.M."/>
            <person name="Vierstra R.D."/>
        </authorList>
    </citation>
    <scope>IDENTIFICATION BY MASS SPECTROMETRY</scope>
    <scope>CHARACTERIZATION OF THE 26S PROTEASOME COMPLEX</scope>
    <scope>SUBUNIT</scope>
</reference>
<comment type="function">
    <text>The proteasome is a multicatalytic proteinase complex which is characterized by its ability to cleave peptides with Arg, Phe, Tyr, Leu, and Glu adjacent to the leaving group at neutral or slightly basic pH. The proteasome has an ATP-dependent proteolytic activity.</text>
</comment>
<comment type="catalytic activity">
    <reaction>
        <text>Cleavage of peptide bonds with very broad specificity.</text>
        <dbReference type="EC" id="3.4.25.1"/>
    </reaction>
</comment>
<comment type="subunit">
    <text evidence="3 4 5">Component of the 20S core complex of the 26S proteasome. The 26S proteasome is composed of a core protease (CP), known as the 20S proteasome, capped at one or both ends by the 19S regulatory particle (RP/PA700). The 20S proteasome core is composed of 28 subunits that are arranged in four stacked rings, resulting in a barrel-shaped structure. The two end rings are each formed by seven alpha subunits, and the two central rings are each formed by seven beta subunits. The catalytic chamber with the active sites is on the inside of the barrel.</text>
</comment>
<comment type="subcellular location">
    <subcellularLocation>
        <location evidence="2">Cytoplasm</location>
    </subcellularLocation>
    <subcellularLocation>
        <location evidence="1">Nucleus</location>
    </subcellularLocation>
</comment>
<comment type="alternative products">
    <event type="alternative splicing"/>
    <isoform>
        <id>O23717-1</id>
        <name>1</name>
        <sequence type="displayed"/>
    </isoform>
    <text>A number of isoforms are produced. According to EST sequences.</text>
</comment>
<comment type="tissue specificity">
    <text evidence="6">Ubiquitous low levels, higher expression in siliques and flowers.</text>
</comment>
<comment type="similarity">
    <text evidence="2">Belongs to the peptidase T1B family.</text>
</comment>
<organism>
    <name type="scientific">Arabidopsis thaliana</name>
    <name type="common">Mouse-ear cress</name>
    <dbReference type="NCBI Taxonomy" id="3702"/>
    <lineage>
        <taxon>Eukaryota</taxon>
        <taxon>Viridiplantae</taxon>
        <taxon>Streptophyta</taxon>
        <taxon>Embryophyta</taxon>
        <taxon>Tracheophyta</taxon>
        <taxon>Spermatophyta</taxon>
        <taxon>Magnoliopsida</taxon>
        <taxon>eudicotyledons</taxon>
        <taxon>Gunneridae</taxon>
        <taxon>Pentapetalae</taxon>
        <taxon>rosids</taxon>
        <taxon>malvids</taxon>
        <taxon>Brassicales</taxon>
        <taxon>Brassicaceae</taxon>
        <taxon>Camelineae</taxon>
        <taxon>Arabidopsis</taxon>
    </lineage>
</organism>
<keyword id="KW-0025">Alternative splicing</keyword>
<keyword id="KW-0963">Cytoplasm</keyword>
<keyword id="KW-0378">Hydrolase</keyword>
<keyword id="KW-0539">Nucleus</keyword>
<keyword id="KW-0645">Protease</keyword>
<keyword id="KW-0647">Proteasome</keyword>
<keyword id="KW-1185">Reference proteome</keyword>
<keyword id="KW-0888">Threonine protease</keyword>
<keyword id="KW-0865">Zymogen</keyword>
<evidence type="ECO:0000250" key="1"/>
<evidence type="ECO:0000255" key="2">
    <source>
        <dbReference type="PROSITE-ProRule" id="PRU00809"/>
    </source>
</evidence>
<evidence type="ECO:0000269" key="3">
    <source>
    </source>
</evidence>
<evidence type="ECO:0000269" key="4">
    <source>
    </source>
</evidence>
<evidence type="ECO:0000269" key="5">
    <source>
    </source>
</evidence>
<evidence type="ECO:0000269" key="6">
    <source>
    </source>
</evidence>
<evidence type="ECO:0000305" key="7"/>
<gene>
    <name type="primary">PBE1</name>
    <name type="synonym">PRCE</name>
    <name type="ordered locus">At1g13060</name>
    <name type="ORF">F3F19.8</name>
</gene>
<accession>O23717</accession>
<accession>Q949V2</accession>
<name>PSB5A_ARATH</name>
<dbReference type="EC" id="3.4.25.1"/>
<dbReference type="EMBL" id="Y13695">
    <property type="protein sequence ID" value="CAA74029.1"/>
    <property type="molecule type" value="mRNA"/>
</dbReference>
<dbReference type="EMBL" id="AF043536">
    <property type="protein sequence ID" value="AAC32072.1"/>
    <property type="molecule type" value="mRNA"/>
</dbReference>
<dbReference type="EMBL" id="AC007357">
    <property type="protein sequence ID" value="AAD31059.1"/>
    <property type="molecule type" value="Genomic_DNA"/>
</dbReference>
<dbReference type="EMBL" id="CP002684">
    <property type="protein sequence ID" value="AEE28965.1"/>
    <property type="molecule type" value="Genomic_DNA"/>
</dbReference>
<dbReference type="EMBL" id="AF348579">
    <property type="protein sequence ID" value="AAK15550.1"/>
    <property type="molecule type" value="mRNA"/>
</dbReference>
<dbReference type="EMBL" id="AY050871">
    <property type="protein sequence ID" value="AAK92808.1"/>
    <property type="molecule type" value="mRNA"/>
</dbReference>
<dbReference type="EMBL" id="AY150473">
    <property type="protein sequence ID" value="AAN12998.1"/>
    <property type="molecule type" value="mRNA"/>
</dbReference>
<dbReference type="PIR" id="F86264">
    <property type="entry name" value="F86264"/>
</dbReference>
<dbReference type="RefSeq" id="NP_172765.1">
    <molecule id="O23717-1"/>
    <property type="nucleotide sequence ID" value="NM_101176.3"/>
</dbReference>
<dbReference type="SMR" id="O23717"/>
<dbReference type="BioGRID" id="23103">
    <property type="interactions" value="57"/>
</dbReference>
<dbReference type="FunCoup" id="O23717">
    <property type="interactions" value="3603"/>
</dbReference>
<dbReference type="STRING" id="3702.O23717"/>
<dbReference type="MEROPS" id="T01.A10"/>
<dbReference type="MetOSite" id="O23717"/>
<dbReference type="PaxDb" id="3702-AT1G13060.2"/>
<dbReference type="ProteomicsDB" id="225991">
    <molecule id="O23717-1"/>
</dbReference>
<dbReference type="EnsemblPlants" id="AT1G13060.1">
    <molecule id="O23717-1"/>
    <property type="protein sequence ID" value="AT1G13060.1"/>
    <property type="gene ID" value="AT1G13060"/>
</dbReference>
<dbReference type="GeneID" id="837863"/>
<dbReference type="Gramene" id="AT1G13060.1">
    <molecule id="O23717-1"/>
    <property type="protein sequence ID" value="AT1G13060.1"/>
    <property type="gene ID" value="AT1G13060"/>
</dbReference>
<dbReference type="KEGG" id="ath:AT1G13060"/>
<dbReference type="Araport" id="AT1G13060"/>
<dbReference type="TAIR" id="AT1G13060">
    <property type="gene designation" value="PBE1"/>
</dbReference>
<dbReference type="eggNOG" id="KOG0175">
    <property type="taxonomic scope" value="Eukaryota"/>
</dbReference>
<dbReference type="HOGENOM" id="CLU_035750_7_3_1"/>
<dbReference type="InParanoid" id="O23717"/>
<dbReference type="OMA" id="HRYKEGM"/>
<dbReference type="PhylomeDB" id="O23717"/>
<dbReference type="CD-CODE" id="4299E36E">
    <property type="entry name" value="Nucleolus"/>
</dbReference>
<dbReference type="PRO" id="PR:O23717"/>
<dbReference type="Proteomes" id="UP000006548">
    <property type="component" value="Chromosome 1"/>
</dbReference>
<dbReference type="ExpressionAtlas" id="O23717">
    <property type="expression patterns" value="baseline and differential"/>
</dbReference>
<dbReference type="GO" id="GO:0005737">
    <property type="term" value="C:cytoplasm"/>
    <property type="evidence" value="ECO:0007669"/>
    <property type="project" value="UniProtKB-SubCell"/>
</dbReference>
<dbReference type="GO" id="GO:0005634">
    <property type="term" value="C:nucleus"/>
    <property type="evidence" value="ECO:0007669"/>
    <property type="project" value="UniProtKB-SubCell"/>
</dbReference>
<dbReference type="GO" id="GO:0019774">
    <property type="term" value="C:proteasome core complex, beta-subunit complex"/>
    <property type="evidence" value="ECO:0000250"/>
    <property type="project" value="UniProtKB"/>
</dbReference>
<dbReference type="GO" id="GO:0004298">
    <property type="term" value="F:threonine-type endopeptidase activity"/>
    <property type="evidence" value="ECO:0007669"/>
    <property type="project" value="UniProtKB-KW"/>
</dbReference>
<dbReference type="GO" id="GO:0051603">
    <property type="term" value="P:proteolysis involved in protein catabolic process"/>
    <property type="evidence" value="ECO:0007669"/>
    <property type="project" value="InterPro"/>
</dbReference>
<dbReference type="CDD" id="cd03761">
    <property type="entry name" value="proteasome_beta_type_5"/>
    <property type="match status" value="1"/>
</dbReference>
<dbReference type="FunFam" id="3.60.20.10:FF:000034">
    <property type="entry name" value="Proteasome subunit beta"/>
    <property type="match status" value="1"/>
</dbReference>
<dbReference type="Gene3D" id="3.60.20.10">
    <property type="entry name" value="Glutamine Phosphoribosylpyrophosphate, subunit 1, domain 1"/>
    <property type="match status" value="1"/>
</dbReference>
<dbReference type="InterPro" id="IPR029055">
    <property type="entry name" value="Ntn_hydrolases_N"/>
</dbReference>
<dbReference type="InterPro" id="IPR000243">
    <property type="entry name" value="Pept_T1A_subB"/>
</dbReference>
<dbReference type="InterPro" id="IPR016050">
    <property type="entry name" value="Proteasome_bsu_CS"/>
</dbReference>
<dbReference type="InterPro" id="IPR001353">
    <property type="entry name" value="Proteasome_sua/b"/>
</dbReference>
<dbReference type="InterPro" id="IPR023333">
    <property type="entry name" value="Proteasome_suB-type"/>
</dbReference>
<dbReference type="PANTHER" id="PTHR32194">
    <property type="entry name" value="METALLOPROTEASE TLDD"/>
    <property type="match status" value="1"/>
</dbReference>
<dbReference type="PANTHER" id="PTHR32194:SF3">
    <property type="entry name" value="PROTEASOME SUBUNIT BETA"/>
    <property type="match status" value="1"/>
</dbReference>
<dbReference type="Pfam" id="PF00227">
    <property type="entry name" value="Proteasome"/>
    <property type="match status" value="1"/>
</dbReference>
<dbReference type="PRINTS" id="PR00141">
    <property type="entry name" value="PROTEASOME"/>
</dbReference>
<dbReference type="SUPFAM" id="SSF56235">
    <property type="entry name" value="N-terminal nucleophile aminohydrolases (Ntn hydrolases)"/>
    <property type="match status" value="1"/>
</dbReference>
<dbReference type="PROSITE" id="PS00854">
    <property type="entry name" value="PROTEASOME_BETA_1"/>
    <property type="match status" value="1"/>
</dbReference>
<dbReference type="PROSITE" id="PS51476">
    <property type="entry name" value="PROTEASOME_BETA_2"/>
    <property type="match status" value="1"/>
</dbReference>
<proteinExistence type="evidence at protein level"/>
<protein>
    <recommendedName>
        <fullName>Proteasome subunit beta type-5-A</fullName>
        <ecNumber>3.4.25.1</ecNumber>
    </recommendedName>
    <alternativeName>
        <fullName>20S proteasome beta subunit E-1</fullName>
    </alternativeName>
    <alternativeName>
        <fullName>Proteasome component E</fullName>
    </alternativeName>
    <alternativeName>
        <fullName>Proteasome epsilon-1 chain</fullName>
    </alternativeName>
</protein>
<feature type="propeptide" id="PRO_0000026605" description="Removed in mature form" evidence="1">
    <location>
        <begin position="1"/>
        <end position="57"/>
    </location>
</feature>
<feature type="chain" id="PRO_0000026606" description="Proteasome subunit beta type-5-A">
    <location>
        <begin position="58"/>
        <end position="274"/>
    </location>
</feature>
<feature type="active site" description="Nucleophile" evidence="1">
    <location>
        <position position="58"/>
    </location>
</feature>
<feature type="sequence conflict" description="In Ref. 5; AAK92808." evidence="7" ref="5">
    <original>M</original>
    <variation>V</variation>
    <location>
        <position position="23"/>
    </location>
</feature>